<reference key="1">
    <citation type="journal article" date="2015" name="Angew. Chem. Int. Ed.">
        <title>Reconstitution of biosynthetic machinery for the synthesis of the highly elaborated indole diterpene penitrem.</title>
        <authorList>
            <person name="Liu C."/>
            <person name="Tagami K."/>
            <person name="Minami A."/>
            <person name="Matsumoto T."/>
            <person name="Frisvad J.C."/>
            <person name="Suzuki H."/>
            <person name="Ishikawa J."/>
            <person name="Gomi K."/>
            <person name="Oikawa H."/>
        </authorList>
    </citation>
    <scope>NUCLEOTIDE SEQUENCE [GENOMIC DNA]</scope>
    <scope>IDENTIFICATION</scope>
    <scope>FUNCTION</scope>
    <scope>PATHWAY</scope>
    <source>
        <strain>ATCC 90288 / AK-40</strain>
    </source>
</reference>
<sequence>MSDVNAWWVGGSLLLGIWAIVVFFSPDPLAQYPVINSKRPGELFYTQSKIRFITQARSLLKEGLSKTNNAFRLVTNNRILLVLHSKYRNELRDHKSLNNTKPPEDDFFGWLQGFEPFNHVKTNPKVFAAMVRTKLTPSIGAVGIPLSEETDFVLQQQLTDSPEWHQINVKETSLQLVARLSARIFLGPQVCRNPAWIGIMINYTVEAFMTAERLRMWPRWLLWLVHWFLPSCKKLRSQVQEARGIISQVLQQRERNRKRAFLETEASDEVDTVQWLEDCAKGGYYDPALLQMGLAVVATHTSADLLSQVIFDLCEHPELLQPLREEIVTVITQHGWSKNAIYNLKLLDSVLKESQRLKPMQIISLYRYVTADITLSDGTLIPKGTYIAMIDDHSLDPNSSYTNGDRYDGYRFINMREVPERSHQTQLVSVSSDHTGFGFGNHACPGRFFAATELKIALCHLLLKYDLKLGDQKPQAMTYGFGLSSDPFTQISVRRRQEEISLAGSKS</sequence>
<gene>
    <name evidence="5" type="primary">ptmU</name>
</gene>
<organism>
    <name type="scientific">Penicillium ochrochloron</name>
    <dbReference type="NCBI Taxonomy" id="69780"/>
    <lineage>
        <taxon>Eukaryota</taxon>
        <taxon>Fungi</taxon>
        <taxon>Dikarya</taxon>
        <taxon>Ascomycota</taxon>
        <taxon>Pezizomycotina</taxon>
        <taxon>Eurotiomycetes</taxon>
        <taxon>Eurotiomycetidae</taxon>
        <taxon>Eurotiales</taxon>
        <taxon>Aspergillaceae</taxon>
        <taxon>Penicillium</taxon>
    </lineage>
</organism>
<proteinExistence type="inferred from homology"/>
<protein>
    <recommendedName>
        <fullName evidence="5">Cytochrome P450 monooxygenase ptmU</fullName>
        <ecNumber evidence="4">1.-.-.-</ecNumber>
    </recommendedName>
    <alternativeName>
        <fullName evidence="5">Penitrem biosynthesis cluster 1 protein U</fullName>
    </alternativeName>
</protein>
<comment type="function">
    <text evidence="4">Cytochrome P450 monooxygenase; part of the gene cluster that mediates the biosynthesis of the indole diterpenes penitrems (PubMed:25831977). The geranylgeranyl diphosphate (GGPP) synthase ptmG catalyzes the first step in penitrem biosynthesis via conversion of farnesyl pyrophosphate and isopentyl pyrophosphate into geranylgeranyl pyrophosphate (GGPP) (PubMed:25831977). Condensation of indole-3-glycerol phosphate with GGPP by the prenyl transferase ptmC then forms 3-geranylgeranylindole (3-GGI) (PubMed:25831977). Epoxidation by the FAD-dependent monooxygenase ptmM leads to a epoxidized-GGI that is substrate of the terpene cyclase ptmB for cyclization to yield paspaline (PubMed:25831977). Paspaline is subsequently converted to 13-desoxypaxilline by the cytochrome P450 monooxygenase ptmP, the latter being then converted to paxilline by the cytochrome P450 monooxygenase ptmQ (PubMed:25831977). Paxilline is converted to beta-paxitriol via C-10 ketoreduction by the short-chain dehydrogenase ptmH which can be monoprenylated at the C-20 by the indole diterpene prenyltransferase ptmD (PubMed:25831977). A two-step elimination (acetylation and elimination) process performed by the O-acetyltransferase ptmV and ptmI leads to the production of the prenylated form of penijanthine (PubMed:25831977). The FAD-linked oxidoreductase ptmO then converts the prenylated form of penijanthine into PC-M5 which is in turn transformed into PC-M4 by the aromatic dimethylallyltransferase ptmE (PubMed:25831977). Five sequential oxidative transformations performed by the cytochrome P450 monooxygenases ptmK, ptmU, ptmL, ptmN and ptmJ yield the various penitrem compounds. PtmK, ptmU and ptmM are involved in the formation of the key bicyclic ring of penitrem C via the formation of the intermediates secopenitrem D and penitrem D. PtmL catalyzes the epoxidation of penitrem D and C to yield penitrem B and F, respectively. PtmJ catalyzes the last benzylic hydroxylation to convert penitrem B to prenitrem E and penitrem F to penitrem A (PubMed:25831977).</text>
</comment>
<comment type="cofactor">
    <cofactor evidence="1">
        <name>heme</name>
        <dbReference type="ChEBI" id="CHEBI:30413"/>
    </cofactor>
</comment>
<comment type="pathway">
    <text evidence="4">Secondary metabolite biosynthesis.</text>
</comment>
<comment type="subcellular location">
    <subcellularLocation>
        <location evidence="2">Membrane</location>
        <topology evidence="2">Single-pass membrane protein</topology>
    </subcellularLocation>
</comment>
<comment type="similarity">
    <text evidence="6">Belongs to the cytochrome P450 family.</text>
</comment>
<accession>A0A140JWT6</accession>
<evidence type="ECO:0000250" key="1">
    <source>
        <dbReference type="UniProtKB" id="P04798"/>
    </source>
</evidence>
<evidence type="ECO:0000255" key="2"/>
<evidence type="ECO:0000255" key="3">
    <source>
        <dbReference type="PROSITE-ProRule" id="PRU00498"/>
    </source>
</evidence>
<evidence type="ECO:0000269" key="4">
    <source>
    </source>
</evidence>
<evidence type="ECO:0000303" key="5">
    <source>
    </source>
</evidence>
<evidence type="ECO:0000305" key="6"/>
<name>PTMU_PENOH</name>
<feature type="chain" id="PRO_0000446578" description="Cytochrome P450 monooxygenase ptmU">
    <location>
        <begin position="1"/>
        <end position="507"/>
    </location>
</feature>
<feature type="transmembrane region" description="Helical" evidence="2">
    <location>
        <begin position="4"/>
        <end position="24"/>
    </location>
</feature>
<feature type="binding site" description="axial binding residue" evidence="1">
    <location>
        <position position="444"/>
    </location>
    <ligand>
        <name>heme</name>
        <dbReference type="ChEBI" id="CHEBI:30413"/>
    </ligand>
    <ligandPart>
        <name>Fe</name>
        <dbReference type="ChEBI" id="CHEBI:18248"/>
    </ligandPart>
</feature>
<feature type="glycosylation site" description="N-linked (GlcNAc...) asparagine" evidence="3">
    <location>
        <position position="98"/>
    </location>
</feature>
<feature type="glycosylation site" description="N-linked (GlcNAc...) asparagine" evidence="3">
    <location>
        <position position="202"/>
    </location>
</feature>
<feature type="glycosylation site" description="N-linked (GlcNAc...) asparagine" evidence="3">
    <location>
        <position position="398"/>
    </location>
</feature>
<dbReference type="EC" id="1.-.-.-" evidence="4"/>
<dbReference type="EMBL" id="LC027936">
    <property type="protein sequence ID" value="BAU61563.1"/>
    <property type="molecule type" value="Genomic_DNA"/>
</dbReference>
<dbReference type="SMR" id="A0A140JWT6"/>
<dbReference type="GlyCosmos" id="A0A140JWT6">
    <property type="glycosylation" value="3 sites, No reported glycans"/>
</dbReference>
<dbReference type="GO" id="GO:0016020">
    <property type="term" value="C:membrane"/>
    <property type="evidence" value="ECO:0007669"/>
    <property type="project" value="UniProtKB-SubCell"/>
</dbReference>
<dbReference type="GO" id="GO:0020037">
    <property type="term" value="F:heme binding"/>
    <property type="evidence" value="ECO:0007669"/>
    <property type="project" value="InterPro"/>
</dbReference>
<dbReference type="GO" id="GO:0005506">
    <property type="term" value="F:iron ion binding"/>
    <property type="evidence" value="ECO:0007669"/>
    <property type="project" value="InterPro"/>
</dbReference>
<dbReference type="GO" id="GO:0004497">
    <property type="term" value="F:monooxygenase activity"/>
    <property type="evidence" value="ECO:0007669"/>
    <property type="project" value="UniProtKB-KW"/>
</dbReference>
<dbReference type="GO" id="GO:0016705">
    <property type="term" value="F:oxidoreductase activity, acting on paired donors, with incorporation or reduction of molecular oxygen"/>
    <property type="evidence" value="ECO:0007669"/>
    <property type="project" value="InterPro"/>
</dbReference>
<dbReference type="GO" id="GO:0043386">
    <property type="term" value="P:mycotoxin biosynthetic process"/>
    <property type="evidence" value="ECO:0007669"/>
    <property type="project" value="UniProtKB-ARBA"/>
</dbReference>
<dbReference type="CDD" id="cd11041">
    <property type="entry name" value="CYP503A1-like"/>
    <property type="match status" value="1"/>
</dbReference>
<dbReference type="Gene3D" id="1.10.630.10">
    <property type="entry name" value="Cytochrome P450"/>
    <property type="match status" value="1"/>
</dbReference>
<dbReference type="InterPro" id="IPR001128">
    <property type="entry name" value="Cyt_P450"/>
</dbReference>
<dbReference type="InterPro" id="IPR017972">
    <property type="entry name" value="Cyt_P450_CS"/>
</dbReference>
<dbReference type="InterPro" id="IPR002403">
    <property type="entry name" value="Cyt_P450_E_grp-IV"/>
</dbReference>
<dbReference type="InterPro" id="IPR036396">
    <property type="entry name" value="Cyt_P450_sf"/>
</dbReference>
<dbReference type="PANTHER" id="PTHR46206">
    <property type="entry name" value="CYTOCHROME P450"/>
    <property type="match status" value="1"/>
</dbReference>
<dbReference type="PANTHER" id="PTHR46206:SF2">
    <property type="entry name" value="CYTOCHROME P450 MONOOXYGENASE AUSG-RELATED"/>
    <property type="match status" value="1"/>
</dbReference>
<dbReference type="Pfam" id="PF00067">
    <property type="entry name" value="p450"/>
    <property type="match status" value="1"/>
</dbReference>
<dbReference type="PRINTS" id="PR00465">
    <property type="entry name" value="EP450IV"/>
</dbReference>
<dbReference type="PRINTS" id="PR00385">
    <property type="entry name" value="P450"/>
</dbReference>
<dbReference type="SUPFAM" id="SSF48264">
    <property type="entry name" value="Cytochrome P450"/>
    <property type="match status" value="1"/>
</dbReference>
<dbReference type="PROSITE" id="PS00086">
    <property type="entry name" value="CYTOCHROME_P450"/>
    <property type="match status" value="1"/>
</dbReference>
<keyword id="KW-0325">Glycoprotein</keyword>
<keyword id="KW-0349">Heme</keyword>
<keyword id="KW-0408">Iron</keyword>
<keyword id="KW-0472">Membrane</keyword>
<keyword id="KW-0479">Metal-binding</keyword>
<keyword id="KW-0503">Monooxygenase</keyword>
<keyword id="KW-0560">Oxidoreductase</keyword>
<keyword id="KW-0812">Transmembrane</keyword>
<keyword id="KW-1133">Transmembrane helix</keyword>